<reference key="1">
    <citation type="journal article" date="2010" name="J. Bacteriol.">
        <title>Genome sequence of the deep-rooted Yersinia pestis strain Angola reveals new insights into the evolution and pangenome of the plague bacterium.</title>
        <authorList>
            <person name="Eppinger M."/>
            <person name="Worsham P.L."/>
            <person name="Nikolich M.P."/>
            <person name="Riley D.R."/>
            <person name="Sebastian Y."/>
            <person name="Mou S."/>
            <person name="Achtman M."/>
            <person name="Lindler L.E."/>
            <person name="Ravel J."/>
        </authorList>
    </citation>
    <scope>NUCLEOTIDE SEQUENCE [LARGE SCALE GENOMIC DNA]</scope>
    <source>
        <strain>Angola</strain>
    </source>
</reference>
<organism>
    <name type="scientific">Yersinia pestis bv. Antiqua (strain Angola)</name>
    <dbReference type="NCBI Taxonomy" id="349746"/>
    <lineage>
        <taxon>Bacteria</taxon>
        <taxon>Pseudomonadati</taxon>
        <taxon>Pseudomonadota</taxon>
        <taxon>Gammaproteobacteria</taxon>
        <taxon>Enterobacterales</taxon>
        <taxon>Yersiniaceae</taxon>
        <taxon>Yersinia</taxon>
    </lineage>
</organism>
<feature type="chain" id="PRO_1000121714" description="Large ribosomal subunit protein bL28">
    <location>
        <begin position="1"/>
        <end position="78"/>
    </location>
</feature>
<feature type="region of interest" description="Disordered" evidence="2">
    <location>
        <begin position="1"/>
        <end position="22"/>
    </location>
</feature>
<keyword id="KW-0687">Ribonucleoprotein</keyword>
<keyword id="KW-0689">Ribosomal protein</keyword>
<dbReference type="EMBL" id="CP000901">
    <property type="protein sequence ID" value="ABX88650.1"/>
    <property type="molecule type" value="Genomic_DNA"/>
</dbReference>
<dbReference type="RefSeq" id="WP_002208991.1">
    <property type="nucleotide sequence ID" value="NZ_CP009935.1"/>
</dbReference>
<dbReference type="SMR" id="A9R675"/>
<dbReference type="GeneID" id="96663531"/>
<dbReference type="KEGG" id="ypg:YpAngola_A0056"/>
<dbReference type="PATRIC" id="fig|349746.12.peg.999"/>
<dbReference type="GO" id="GO:1990904">
    <property type="term" value="C:ribonucleoprotein complex"/>
    <property type="evidence" value="ECO:0007669"/>
    <property type="project" value="UniProtKB-KW"/>
</dbReference>
<dbReference type="GO" id="GO:0005840">
    <property type="term" value="C:ribosome"/>
    <property type="evidence" value="ECO:0007669"/>
    <property type="project" value="UniProtKB-KW"/>
</dbReference>
<dbReference type="GO" id="GO:0003735">
    <property type="term" value="F:structural constituent of ribosome"/>
    <property type="evidence" value="ECO:0007669"/>
    <property type="project" value="InterPro"/>
</dbReference>
<dbReference type="GO" id="GO:0006412">
    <property type="term" value="P:translation"/>
    <property type="evidence" value="ECO:0007669"/>
    <property type="project" value="UniProtKB-UniRule"/>
</dbReference>
<dbReference type="FunFam" id="2.30.170.40:FF:000001">
    <property type="entry name" value="50S ribosomal protein L28"/>
    <property type="match status" value="1"/>
</dbReference>
<dbReference type="Gene3D" id="2.30.170.40">
    <property type="entry name" value="Ribosomal protein L28/L24"/>
    <property type="match status" value="1"/>
</dbReference>
<dbReference type="HAMAP" id="MF_00373">
    <property type="entry name" value="Ribosomal_bL28"/>
    <property type="match status" value="1"/>
</dbReference>
<dbReference type="InterPro" id="IPR050096">
    <property type="entry name" value="Bacterial_rp_bL28"/>
</dbReference>
<dbReference type="InterPro" id="IPR026569">
    <property type="entry name" value="Ribosomal_bL28"/>
</dbReference>
<dbReference type="InterPro" id="IPR034704">
    <property type="entry name" value="Ribosomal_bL28/bL31-like_sf"/>
</dbReference>
<dbReference type="InterPro" id="IPR001383">
    <property type="entry name" value="Ribosomal_bL28_bact-type"/>
</dbReference>
<dbReference type="InterPro" id="IPR037147">
    <property type="entry name" value="Ribosomal_bL28_sf"/>
</dbReference>
<dbReference type="NCBIfam" id="TIGR00009">
    <property type="entry name" value="L28"/>
    <property type="match status" value="1"/>
</dbReference>
<dbReference type="PANTHER" id="PTHR39080">
    <property type="entry name" value="50S RIBOSOMAL PROTEIN L28"/>
    <property type="match status" value="1"/>
</dbReference>
<dbReference type="PANTHER" id="PTHR39080:SF1">
    <property type="entry name" value="LARGE RIBOSOMAL SUBUNIT PROTEIN BL28A"/>
    <property type="match status" value="1"/>
</dbReference>
<dbReference type="Pfam" id="PF00830">
    <property type="entry name" value="Ribosomal_L28"/>
    <property type="match status" value="1"/>
</dbReference>
<dbReference type="SUPFAM" id="SSF143800">
    <property type="entry name" value="L28p-like"/>
    <property type="match status" value="1"/>
</dbReference>
<proteinExistence type="inferred from homology"/>
<protein>
    <recommendedName>
        <fullName evidence="1">Large ribosomal subunit protein bL28</fullName>
    </recommendedName>
    <alternativeName>
        <fullName evidence="3">50S ribosomal protein L28</fullName>
    </alternativeName>
</protein>
<name>RL28_YERPG</name>
<gene>
    <name evidence="1" type="primary">rpmB</name>
    <name type="ordered locus">YpAngola_A0056</name>
</gene>
<evidence type="ECO:0000255" key="1">
    <source>
        <dbReference type="HAMAP-Rule" id="MF_00373"/>
    </source>
</evidence>
<evidence type="ECO:0000256" key="2">
    <source>
        <dbReference type="SAM" id="MobiDB-lite"/>
    </source>
</evidence>
<evidence type="ECO:0000305" key="3"/>
<accession>A9R675</accession>
<comment type="similarity">
    <text evidence="1">Belongs to the bacterial ribosomal protein bL28 family.</text>
</comment>
<sequence>MSRVCQVTGKRPMSGNNRSHAMNATKRRFLPNLHSHRFWVEGEKRFVTLRVSAKGMRVIDKKGIETVLAEIRARGEKY</sequence>